<sequence length="609" mass="68364">MAQAEVLNLESGAKQVLQETFGYQQFRPGQEEIIDTVLSGRDCLVVMPTGGGKSLCYQIPALLLNGLTVVVSPLISLMKDQVDQLQANGVAAACLNSTQTREQQLEVMTGCRTGQIRLLYIAPERLMLDNFLEHLAHWNPVLLAVDEAHCISQWGHDFRPEYAALGQLRQRFPTLPFMALTATADDTTRQDIVRLLGLNDPLIQISSFDRPNIRYMLMEKFKPLDQLMRYVQEQRGKSGIIYCNSRAKVEDTAARLQSKGISAAAYHAGLENNVRADVQEKFQRDDLQIVVATVAFGMGINKPNVRFVVHFDIPRNIESYYQETGRAGRDGLPAEAMLFYDPADMAWLRRCLEEKPQGQLQDIERHKLNAMGAFAEAQTCRRLVLLNYFGEGRQEPCGNCDICLDPPKQYDGSTDAQIALSTIGRVNQRFGMGYVVEVIRGANNQRIRDYGHDKLKVYGMGRDKSHEHWVSVIRQLIHLGLVTQNIAQHSALQLTEAARPVLRGESSLQLAVPRIVALKPKAMQKSFGGNYDRKLFAKLRKLRKSIADESNVPPYVVFNDATLIEMAEQMPITASEMLSVNGVGMRKLERFGKPFMALIRAHVDGDDEE</sequence>
<proteinExistence type="evidence at protein level"/>
<comment type="function">
    <text evidence="4 5 7 8 9 10 11 12 15">An ATP-dependent DNA helicase which unwinds DNA in a 3'-5' direction (PubMed:12771204, PubMed:16084389, PubMed:2164680, PubMed:9553043). ATPase activity is stimulated by single-stranded (ss)DNA but only very poorly by double-stranded (ds)DNA (PubMed:2164680). Binds to and unwinds a wide variety of substrates including 3- and 4-way junctions (including Holliday junctions, HJ), flayed duplexes, 5'- and 3'-overhangs and blunt end duplexes (PubMed:19151156, PubMed:9553043, PubMed:22722926). HJ DNA unwinding is stimulated by single-stranded binding protein (SSB) (PubMed:22722926). Unwinds G-quadruplex DNA (PubMed:11292849, PubMed:23657261). Unlike yeast SGS1 or human BLM, is equally active on dsDNA versus G-quadruplex substrates (PubMed:11292849). Can act as an initiator during homologous recombination; unwinds a linear dsDNA substrate which can be used by RecA to initiate homologous DNA pairing as well as dissociation (PubMed:9553043). The identity of a few residues in the C-terminal HRDC domain influences the type of DNA substrate bound (PubMed:16084389). Involved in the RecF recombination pathway (PubMed:2993821).</text>
</comment>
<comment type="catalytic activity">
    <reaction evidence="5 9 11">
        <text>Couples ATP hydrolysis with the unwinding of duplex DNA by translocating in the 3'-5' direction.</text>
        <dbReference type="EC" id="5.6.2.4"/>
    </reaction>
</comment>
<comment type="catalytic activity">
    <reaction evidence="5 9 10 11">
        <text>ATP + H2O = ADP + phosphate + H(+)</text>
        <dbReference type="Rhea" id="RHEA:13065"/>
        <dbReference type="ChEBI" id="CHEBI:15377"/>
        <dbReference type="ChEBI" id="CHEBI:15378"/>
        <dbReference type="ChEBI" id="CHEBI:30616"/>
        <dbReference type="ChEBI" id="CHEBI:43474"/>
        <dbReference type="ChEBI" id="CHEBI:456216"/>
        <dbReference type="EC" id="5.6.2.4"/>
    </reaction>
    <physiologicalReaction direction="left-to-right" evidence="5 9">
        <dbReference type="Rhea" id="RHEA:13066"/>
    </physiologicalReaction>
</comment>
<comment type="cofactor">
    <cofactor evidence="4 9">
        <name>Mg(2+)</name>
        <dbReference type="ChEBI" id="CHEBI:18420"/>
    </cofactor>
    <text evidence="4 9">Requires Mg(2+) for helicase activity on dsDNA and G-quadruplex DNA; Mn(2+) and Ca(2+) also support unwinding (PubMed:11292849, PubMed:2164680).</text>
</comment>
<comment type="cofactor">
    <cofactor evidence="6 20 21">
        <name>Zn(2+)</name>
        <dbReference type="ChEBI" id="CHEBI:29105"/>
    </cofactor>
</comment>
<comment type="activity regulation">
    <text evidence="4 5 9">Helicase activity on dsDNA is inhibited by ATP-gamma-S (PubMed:12771204, PubMed:2164680). Helicase activity on dsDNA is inhibited by porphyrin derivative meso-tetra (N-methyl-4-pyridyl) porphine tetra tosylate (T4) at 20 uM but not inhibited by N-methyl mesoporphyrin IX (NMM) (PubMed:11292849). Helicase activity on G-quadruplex DNA is inhibited by porphyrin derivatives T4 (2 uM) and NMM (0.2 uM) but not by ATP-gamma-S (PubMed:11292849).</text>
</comment>
<comment type="biophysicochemical properties">
    <temperatureDependence>
        <text evidence="10">Optimum temperature is 50 degrees Celsius, able to efficiently unwind Holliday junction DNA at 55 degrees Celsius.</text>
    </temperatureDependence>
</comment>
<comment type="induction">
    <text evidence="13">By mitomycin C and UV irradiation under the regulation of the SOS system (PubMed:3027506).</text>
</comment>
<comment type="domain">
    <text evidence="5 6 7">Limited proteoloysis experiments show there is a large N-terminal domain with ATPase/helicase functions and a non-essential C-terminal domain (HRDC) (PubMed:12771204). The N-terminal 21 residues are required for helicase and ATPase activity, the C-terminal HRDC domain is required for stable DNA-binding but not ATPase or helicase activity (PubMed:12771204). Has 5 structural subdomains; the first 2 (residues 1-208 and 209-340) are the conserved helicase domains which abut and form a deep cleft that probably binds ATP and ssDNA (PubMed:14517231). The third (residues 341-406) forms a platform of helices sandwiched between the helicase and next domain and binds a Zn(2+) ion (PubMed:14517231). The fourth domain (residues 407-516) forms a helix-turn-helix WH-type subdomain (PubMed:14517231). A large cleft forms between the Zn-binding and WH subdomains which might bind dsDNA (PubMed:14517231). The fifth HRDC domain (residues 524-609) forms a globular bundles of helices, and as a single domain binds preferentially to ssDNA via an elongated binding site that wraps along its surface; in the whole protein alters the type of DNA substrate bound (PubMed:16084389).</text>
</comment>
<comment type="disruption phenotype">
    <text evidence="12 14">Increased sensitivity to UV light and recombination deficient in a recBC sbeB background, partially resistant to thymineless death (PubMed:2993821). Increased genetic instability of G-quadruplex DNA; a double recG-recQ deletion shows 10-fold increased genetic instability (PubMed:37761860).</text>
</comment>
<comment type="similarity">
    <text evidence="18">Belongs to the helicase family. RecQ subfamily.</text>
</comment>
<comment type="sequence caution" evidence="18">
    <conflict type="erroneous initiation">
        <sequence resource="EMBL-CDS" id="AAA24517"/>
    </conflict>
    <text>Extended N-terminus.</text>
</comment>
<comment type="sequence caution" evidence="18">
    <conflict type="erroneous initiation">
        <sequence resource="EMBL-CDS" id="AAA67618"/>
    </conflict>
    <text>Extended N-terminus.</text>
</comment>
<evidence type="ECO:0000255" key="1">
    <source>
        <dbReference type="PROSITE-ProRule" id="PRU00328"/>
    </source>
</evidence>
<evidence type="ECO:0000255" key="2">
    <source>
        <dbReference type="PROSITE-ProRule" id="PRU00541"/>
    </source>
</evidence>
<evidence type="ECO:0000255" key="3">
    <source>
        <dbReference type="PROSITE-ProRule" id="PRU00542"/>
    </source>
</evidence>
<evidence type="ECO:0000269" key="4">
    <source>
    </source>
</evidence>
<evidence type="ECO:0000269" key="5">
    <source>
    </source>
</evidence>
<evidence type="ECO:0000269" key="6">
    <source>
    </source>
</evidence>
<evidence type="ECO:0000269" key="7">
    <source>
    </source>
</evidence>
<evidence type="ECO:0000269" key="8">
    <source>
    </source>
</evidence>
<evidence type="ECO:0000269" key="9">
    <source>
    </source>
</evidence>
<evidence type="ECO:0000269" key="10">
    <source>
    </source>
</evidence>
<evidence type="ECO:0000269" key="11">
    <source>
    </source>
</evidence>
<evidence type="ECO:0000269" key="12">
    <source>
    </source>
</evidence>
<evidence type="ECO:0000269" key="13">
    <source>
    </source>
</evidence>
<evidence type="ECO:0000269" key="14">
    <source>
    </source>
</evidence>
<evidence type="ECO:0000269" key="15">
    <source>
    </source>
</evidence>
<evidence type="ECO:0000303" key="16">
    <source>
    </source>
</evidence>
<evidence type="ECO:0000303" key="17">
    <source>
    </source>
</evidence>
<evidence type="ECO:0000305" key="18"/>
<evidence type="ECO:0000305" key="19">
    <source>
    </source>
</evidence>
<evidence type="ECO:0000312" key="20">
    <source>
        <dbReference type="PDB" id="1OYW"/>
    </source>
</evidence>
<evidence type="ECO:0000312" key="21">
    <source>
        <dbReference type="PDB" id="1OYY"/>
    </source>
</evidence>
<evidence type="ECO:0007744" key="22">
    <source>
        <dbReference type="PDB" id="1OYW"/>
    </source>
</evidence>
<evidence type="ECO:0007744" key="23">
    <source>
        <dbReference type="PDB" id="1OYY"/>
    </source>
</evidence>
<evidence type="ECO:0007744" key="24">
    <source>
        <dbReference type="PDB" id="1WUD"/>
    </source>
</evidence>
<evidence type="ECO:0007829" key="25">
    <source>
        <dbReference type="PDB" id="1OYW"/>
    </source>
</evidence>
<evidence type="ECO:0007829" key="26">
    <source>
        <dbReference type="PDB" id="1OYY"/>
    </source>
</evidence>
<evidence type="ECO:0007829" key="27">
    <source>
        <dbReference type="PDB" id="1WUD"/>
    </source>
</evidence>
<protein>
    <recommendedName>
        <fullName evidence="16">ATP-dependent DNA helicase RecQ</fullName>
        <ecNumber evidence="5 9">5.6.2.4</ecNumber>
    </recommendedName>
    <alternativeName>
        <fullName evidence="18">DNA 3'-5' helicase RecQ</fullName>
    </alternativeName>
</protein>
<organism>
    <name type="scientific">Escherichia coli (strain K12)</name>
    <dbReference type="NCBI Taxonomy" id="83333"/>
    <lineage>
        <taxon>Bacteria</taxon>
        <taxon>Pseudomonadati</taxon>
        <taxon>Pseudomonadota</taxon>
        <taxon>Gammaproteobacteria</taxon>
        <taxon>Enterobacterales</taxon>
        <taxon>Enterobacteriaceae</taxon>
        <taxon>Escherichia</taxon>
    </lineage>
</organism>
<accession>P15043</accession>
<accession>P76762</accession>
<accession>Q2M8C7</accession>
<accession>Q6BEZ3</accession>
<name>RECQ_ECOLI</name>
<reference key="1">
    <citation type="journal article" date="1986" name="Mol. Gen. Genet.">
        <title>The recQ gene of Escherichia coli K12: primary structure and evidence for SOS regulation.</title>
        <authorList>
            <person name="Irino N."/>
            <person name="Nakayama K."/>
            <person name="Nakayama H."/>
        </authorList>
    </citation>
    <scope>NUCLEOTIDE SEQUENCE [GENOMIC DNA]</scope>
    <scope>INDUCTION BY SOS RESPONSE</scope>
    <source>
        <strain>K12</strain>
    </source>
</reference>
<reference key="2">
    <citation type="journal article" date="1992" name="Science">
        <title>Analysis of the Escherichia coli genome: DNA sequence of the region from 84.5 to 86.5 minutes.</title>
        <authorList>
            <person name="Daniels D.L."/>
            <person name="Plunkett G. III"/>
            <person name="Burland V.D."/>
            <person name="Blattner F.R."/>
        </authorList>
    </citation>
    <scope>NUCLEOTIDE SEQUENCE [LARGE SCALE GENOMIC DNA]</scope>
    <source>
        <strain>K12 / MG1655 / ATCC 47076</strain>
    </source>
</reference>
<reference key="3">
    <citation type="journal article" date="1997" name="Science">
        <title>The complete genome sequence of Escherichia coli K-12.</title>
        <authorList>
            <person name="Blattner F.R."/>
            <person name="Plunkett G. III"/>
            <person name="Bloch C.A."/>
            <person name="Perna N.T."/>
            <person name="Burland V."/>
            <person name="Riley M."/>
            <person name="Collado-Vides J."/>
            <person name="Glasner J.D."/>
            <person name="Rode C.K."/>
            <person name="Mayhew G.F."/>
            <person name="Gregor J."/>
            <person name="Davis N.W."/>
            <person name="Kirkpatrick H.A."/>
            <person name="Goeden M.A."/>
            <person name="Rose D.J."/>
            <person name="Mau B."/>
            <person name="Shao Y."/>
        </authorList>
    </citation>
    <scope>NUCLEOTIDE SEQUENCE [LARGE SCALE GENOMIC DNA]</scope>
    <scope>SEQUENCE REVISION TO 254</scope>
    <source>
        <strain>K12 / MG1655 / ATCC 47076</strain>
    </source>
</reference>
<reference key="4">
    <citation type="journal article" date="2006" name="Nucleic Acids Res.">
        <title>Escherichia coli K-12: a cooperatively developed annotation snapshot -- 2005.</title>
        <authorList>
            <person name="Riley M."/>
            <person name="Abe T."/>
            <person name="Arnaud M.B."/>
            <person name="Berlyn M.K.B."/>
            <person name="Blattner F.R."/>
            <person name="Chaudhuri R.R."/>
            <person name="Glasner J.D."/>
            <person name="Horiuchi T."/>
            <person name="Keseler I.M."/>
            <person name="Kosuge T."/>
            <person name="Mori H."/>
            <person name="Perna N.T."/>
            <person name="Plunkett G. III"/>
            <person name="Rudd K.E."/>
            <person name="Serres M.H."/>
            <person name="Thomas G.H."/>
            <person name="Thomson N.R."/>
            <person name="Wishart D."/>
            <person name="Wanner B.L."/>
        </authorList>
    </citation>
    <scope>SEQUENCE REVISION TO 503-504</scope>
</reference>
<reference key="5">
    <citation type="journal article" date="2006" name="Mol. Syst. Biol.">
        <title>Highly accurate genome sequences of Escherichia coli K-12 strains MG1655 and W3110.</title>
        <authorList>
            <person name="Hayashi K."/>
            <person name="Morooka N."/>
            <person name="Yamamoto Y."/>
            <person name="Fujita K."/>
            <person name="Isono K."/>
            <person name="Choi S."/>
            <person name="Ohtsubo E."/>
            <person name="Baba T."/>
            <person name="Wanner B.L."/>
            <person name="Mori H."/>
            <person name="Horiuchi T."/>
        </authorList>
    </citation>
    <scope>NUCLEOTIDE SEQUENCE [LARGE SCALE GENOMIC DNA]</scope>
    <source>
        <strain>K12 / W3110 / ATCC 27325 / DSM 5911</strain>
    </source>
</reference>
<reference key="6">
    <citation type="journal article" date="1990" name="Proc. Natl. Acad. Sci. U.S.A.">
        <title>Escherichia coli RecQ protein is a DNA helicase.</title>
        <authorList>
            <person name="Umezu K."/>
            <person name="Nakayama K."/>
            <person name="Nakayama H."/>
        </authorList>
    </citation>
    <scope>PROTEIN SEQUENCE OF 2-6</scope>
    <scope>FUNCTION AS A 3'-5' DNA HELICASE</scope>
    <scope>CATALYTIC ACTIVITY</scope>
    <scope>ACTIVITY REGULATION</scope>
    <scope>COFACTOR</scope>
</reference>
<reference key="7">
    <citation type="journal article" date="2003" name="Nucleic Acids Res.">
        <title>Domain mapping of Escherichia coli RecQ defines the roles of conserved N- and C-terminal regions in the RecQ family.</title>
        <authorList>
            <person name="Bernstein D.A."/>
            <person name="Keck J.L."/>
        </authorList>
    </citation>
    <scope>PROTEIN SEQUENCE OF 9-12 AND 23-26</scope>
    <scope>FUNCTION</scope>
    <scope>CATALYTIC ACTIVITY</scope>
    <scope>DOMAIN</scope>
    <scope>DNA-BINDING</scope>
    <scope>MUTAGENESIS OF 2-ALA--PHE-21 AND 531-TYR--GLU-609</scope>
    <source>
        <strain>K12 / DH5-alpha</strain>
    </source>
</reference>
<reference key="8">
    <citation type="journal article" date="1985" name="Mol. Gen. Genet.">
        <title>The recQ gene of Escherichia coli K12: molecular cloning and isolation of insertion mutants.</title>
        <authorList>
            <person name="Nakayama K."/>
            <person name="Irino N."/>
            <person name="Nakayama H."/>
        </authorList>
    </citation>
    <scope>FUNCTION</scope>
    <scope>DISRUPTION PHENOTYPE</scope>
</reference>
<reference key="9">
    <citation type="journal article" date="1998" name="Genes Dev.">
        <title>RecQ helicase, in concert with RecA and SSB proteins, initiates and disrupts DNA recombination.</title>
        <authorList>
            <person name="Harmon F.G."/>
            <person name="Kowalczykowski S.C."/>
        </authorList>
    </citation>
    <scope>FUNCTION IN DNA UNWINDING</scope>
    <scope>PROBABLE FUNCTION IN RECOMBINATION</scope>
    <scope>ACTIVITY REGULATION</scope>
</reference>
<reference key="10">
    <citation type="journal article" date="2001" name="Nucleic Acids Res.">
        <title>Substrate-specific inhibition of RecQ helicase.</title>
        <authorList>
            <person name="Wu X."/>
            <person name="Maizels N."/>
        </authorList>
    </citation>
    <scope>FUNCTION IN G4 UNWINDING</scope>
    <scope>CATALYTIC ACTIVITY</scope>
    <scope>ACTIVITY REGULATION</scope>
    <scope>COFACTOR</scope>
</reference>
<reference key="11">
    <citation type="journal article" date="2009" name="Proc. Natl. Acad. Sci. U.S.A.">
        <title>Structure of the human RECQ1 helicase reveals a putative strand-separation pin.</title>
        <authorList>
            <person name="Pike A.C."/>
            <person name="Shrestha B."/>
            <person name="Popuri V."/>
            <person name="Burgess-Brown N."/>
            <person name="Muzzolini L."/>
            <person name="Costantini S."/>
            <person name="Vindigni A."/>
            <person name="Gileadi O."/>
        </authorList>
    </citation>
    <scope>FUNCTION</scope>
    <scope>MUTAGENESIS OF HIS-489</scope>
</reference>
<reference key="12">
    <citation type="journal article" date="2012" name="J. Biol. Chem.">
        <title>Synergic and opposing activities of thermophilic RecQ-like helicase and topoisomerase 3 proteins in Holliday junction processing and replication fork stabilization.</title>
        <authorList>
            <person name="Valenti A."/>
            <person name="De Felice M."/>
            <person name="Perugino G."/>
            <person name="Bizard A."/>
            <person name="Nadal M."/>
            <person name="Rossi M."/>
            <person name="Ciaramella M."/>
        </authorList>
    </citation>
    <scope>FUNCTION</scope>
    <scope>CATALYTIC ACTIVITY</scope>
    <scope>BIOPHYSICOCHEMICAL PROPERTIES</scope>
</reference>
<reference key="13">
    <citation type="journal article" date="2013" name="Nature">
        <title>Pif1 family helicases suppress genome instability at G-quadruplex motifs.</title>
        <authorList>
            <person name="Paeschke K."/>
            <person name="Bochman M.L."/>
            <person name="Garcia P.D."/>
            <person name="Cejka P."/>
            <person name="Friedman K.L."/>
            <person name="Kowalczykowski S.C."/>
            <person name="Zakian V.A."/>
        </authorList>
    </citation>
    <scope>FUNCTION IN G4 UNWINDING</scope>
    <scope>CATALYTIC ACTIVITY</scope>
</reference>
<reference key="14">
    <citation type="journal article" date="2023" name="Genes (Basel)">
        <title>Genomic Instability of G-Quadruplex Sequences in Escherichia coli: Roles of DinG, RecG, and RecQ Helicases.</title>
        <authorList>
            <person name="Parekh V.J."/>
            <person name="Wegrzyn G."/>
            <person name="Arluison V."/>
            <person name="Sinden R.R."/>
        </authorList>
    </citation>
    <scope>DISRUPTION PHENOTYPE</scope>
    <source>
        <strain>K12 / AB1157</strain>
    </source>
</reference>
<reference evidence="22 23" key="15">
    <citation type="journal article" date="2003" name="EMBO J.">
        <title>High-resolution structure of the E.coli RecQ helicase catalytic core.</title>
        <authorList>
            <person name="Bernstein D.A."/>
            <person name="Zittel M.C."/>
            <person name="Keck J.L."/>
        </authorList>
    </citation>
    <scope>X-RAY CRYSTALLOGRAPHY (1.80 ANGSTROMS) OF 1-522 IN COMPLEX WITH ATP ANALOG; MN(2+) AND ZN(2+)</scope>
    <scope>COFACTOR</scope>
    <scope>DOMAIN</scope>
</reference>
<reference evidence="24" key="16">
    <citation type="journal article" date="2005" name="Structure">
        <title>Conferring substrate specificity to DNA helicases: role of the RecQ HRDC domain.</title>
        <authorList>
            <person name="Bernstein D.A."/>
            <person name="Keck J.L."/>
        </authorList>
    </citation>
    <scope>X-RAY CRYSTALLOGRAPHY (2.20 ANGSTROMS) OF 524-609</scope>
    <scope>FUNCTION</scope>
    <scope>DOMAIN</scope>
    <scope>DNA-BINDING</scope>
    <scope>MUTAGENESIS OF LYS-534; ARG-540; ARG-543; LYS-544; TYR-555 AND LYS-587</scope>
</reference>
<feature type="initiator methionine" description="Removed" evidence="9">
    <location>
        <position position="1"/>
    </location>
</feature>
<feature type="chain" id="PRO_0000205033" description="ATP-dependent DNA helicase RecQ">
    <location>
        <begin position="2"/>
        <end position="609"/>
    </location>
</feature>
<feature type="domain" description="Helicase ATP-binding" evidence="2">
    <location>
        <begin position="34"/>
        <end position="202"/>
    </location>
</feature>
<feature type="domain" description="Helicase C-terminal" evidence="3">
    <location>
        <begin position="223"/>
        <end position="371"/>
    </location>
</feature>
<feature type="domain" description="HRDC" evidence="1">
    <location>
        <begin position="529"/>
        <end position="609"/>
    </location>
</feature>
<feature type="short sequence motif" description="DEAH box" evidence="2">
    <location>
        <begin position="146"/>
        <end position="149"/>
    </location>
</feature>
<feature type="binding site" evidence="22">
    <location>
        <position position="10"/>
    </location>
    <ligand>
        <name>Mn(2+)</name>
        <dbReference type="ChEBI" id="CHEBI:29035"/>
    </ligand>
</feature>
<feature type="binding site" evidence="19 21">
    <location>
        <position position="23"/>
    </location>
    <ligand>
        <name>ATP</name>
        <dbReference type="ChEBI" id="CHEBI:30616"/>
    </ligand>
</feature>
<feature type="binding site" evidence="19 21">
    <location>
        <position position="27"/>
    </location>
    <ligand>
        <name>ATP</name>
        <dbReference type="ChEBI" id="CHEBI:30616"/>
    </ligand>
</feature>
<feature type="binding site" evidence="19 21">
    <location>
        <position position="30"/>
    </location>
    <ligand>
        <name>ATP</name>
        <dbReference type="ChEBI" id="CHEBI:30616"/>
    </ligand>
</feature>
<feature type="binding site" evidence="22">
    <location>
        <position position="31"/>
    </location>
    <ligand>
        <name>Mn(2+)</name>
        <dbReference type="ChEBI" id="CHEBI:29035"/>
    </ligand>
</feature>
<feature type="binding site" evidence="22">
    <location>
        <position position="35"/>
    </location>
    <ligand>
        <name>Mn(2+)</name>
        <dbReference type="ChEBI" id="CHEBI:29035"/>
    </ligand>
</feature>
<feature type="binding site" evidence="21">
    <location>
        <position position="50"/>
    </location>
    <ligand>
        <name>ATP</name>
        <dbReference type="ChEBI" id="CHEBI:30616"/>
    </ligand>
</feature>
<feature type="binding site" evidence="19 21">
    <location>
        <position position="51"/>
    </location>
    <ligand>
        <name>ATP</name>
        <dbReference type="ChEBI" id="CHEBI:30616"/>
    </ligand>
</feature>
<feature type="binding site" evidence="19 21">
    <location>
        <position position="52"/>
    </location>
    <ligand>
        <name>ATP</name>
        <dbReference type="ChEBI" id="CHEBI:30616"/>
    </ligand>
</feature>
<feature type="binding site" evidence="19 21">
    <location>
        <position position="53"/>
    </location>
    <ligand>
        <name>ATP</name>
        <dbReference type="ChEBI" id="CHEBI:30616"/>
    </ligand>
</feature>
<feature type="binding site" evidence="19 21">
    <location>
        <position position="54"/>
    </location>
    <ligand>
        <name>ATP</name>
        <dbReference type="ChEBI" id="CHEBI:30616"/>
    </ligand>
</feature>
<feature type="binding site" evidence="6 22 23">
    <location>
        <position position="380"/>
    </location>
    <ligand>
        <name>Zn(2+)</name>
        <dbReference type="ChEBI" id="CHEBI:29105"/>
    </ligand>
</feature>
<feature type="binding site" evidence="6 22 23">
    <location>
        <position position="397"/>
    </location>
    <ligand>
        <name>Zn(2+)</name>
        <dbReference type="ChEBI" id="CHEBI:29105"/>
    </ligand>
</feature>
<feature type="binding site" evidence="6 22 23">
    <location>
        <position position="400"/>
    </location>
    <ligand>
        <name>Zn(2+)</name>
        <dbReference type="ChEBI" id="CHEBI:29105"/>
    </ligand>
</feature>
<feature type="binding site" evidence="6 22 23">
    <location>
        <position position="403"/>
    </location>
    <ligand>
        <name>Zn(2+)</name>
        <dbReference type="ChEBI" id="CHEBI:29105"/>
    </ligand>
</feature>
<feature type="mutagenesis site" description="No change in DNA binding, nearly complete loss of DNA-stimulated ATPase activity, loss of helicase activity." evidence="5">
    <location>
        <begin position="2"/>
        <end position="21"/>
    </location>
</feature>
<feature type="mutagenesis site" description="No change in DNA fork unwinding." evidence="8">
    <original>H</original>
    <variation>A</variation>
    <location>
        <position position="489"/>
    </location>
</feature>
<feature type="mutagenesis site" description="No longer stably binds 3'-overhang DNA, no change in DNA-stimulated ATPase or helicase activities with 3'-overhang substrate. Increased binding of Holliday junction DNA." evidence="5 7">
    <location>
        <begin position="531"/>
        <end position="609"/>
    </location>
</feature>
<feature type="mutagenesis site" description="Nearly 10-fold decrease in ssDNA binding by HRDC fragment." evidence="7">
    <original>K</original>
    <variation>A</variation>
    <location>
        <position position="534"/>
    </location>
</feature>
<feature type="mutagenesis site" description="Over 10-fold decrease in ssDNA binding by HRDC fragment." evidence="7">
    <original>R</original>
    <variation>A</variation>
    <location>
        <position position="540"/>
    </location>
</feature>
<feature type="mutagenesis site" description="Over 10-fold decrease in ssDNA binding by HRDC fragment." evidence="7">
    <original>R</original>
    <variation>A</variation>
    <location>
        <position position="543"/>
    </location>
</feature>
<feature type="mutagenesis site" description="Nearly 10-fold decrease in ssDNA binding by HRDC fragment." evidence="7">
    <original>K</original>
    <variation>A</variation>
    <location>
        <position position="544"/>
    </location>
</feature>
<feature type="mutagenesis site" description="HRDC fragment binds ssDNA very poorly, whole protein no longer binds 3'-overhang DNA but binds Holliday junctions better, whole protein has full helicase activity with 3'-overhang substrate." evidence="7">
    <original>Y</original>
    <variation>A</variation>
    <location>
        <position position="555"/>
    </location>
</feature>
<feature type="mutagenesis site" description="Over 10-fold decrease in ssDNA binding by HRDC fragment." evidence="7">
    <original>K</original>
    <variation>A</variation>
    <location>
        <position position="587"/>
    </location>
</feature>
<feature type="sequence conflict" description="In Ref. 1; AAA24517 and 2; AAA67618." evidence="18" ref="1 2">
    <original>R</original>
    <variation>A</variation>
    <location>
        <position position="255"/>
    </location>
</feature>
<feature type="sequence conflict" description="In Ref. 1; AAA24517 and 2; AAA67618." evidence="18" ref="1 2">
    <original>RG</original>
    <variation>A</variation>
    <location>
        <begin position="503"/>
        <end position="504"/>
    </location>
</feature>
<feature type="sequence conflict" description="In Ref. 1; AAA24517." evidence="18" ref="1">
    <original>R</original>
    <variation>P</variation>
    <location>
        <position position="600"/>
    </location>
</feature>
<feature type="helix" evidence="25">
    <location>
        <begin position="9"/>
        <end position="19"/>
    </location>
</feature>
<feature type="helix" evidence="25">
    <location>
        <begin position="30"/>
        <end position="38"/>
    </location>
</feature>
<feature type="strand" evidence="25">
    <location>
        <begin position="43"/>
        <end position="46"/>
    </location>
</feature>
<feature type="helix" evidence="25">
    <location>
        <begin position="50"/>
        <end position="63"/>
    </location>
</feature>
<feature type="strand" evidence="25">
    <location>
        <begin position="64"/>
        <end position="71"/>
    </location>
</feature>
<feature type="helix" evidence="25">
    <location>
        <begin position="75"/>
        <end position="87"/>
    </location>
</feature>
<feature type="strand" evidence="25">
    <location>
        <begin position="92"/>
        <end position="95"/>
    </location>
</feature>
<feature type="helix" evidence="25">
    <location>
        <begin position="101"/>
        <end position="112"/>
    </location>
</feature>
<feature type="strand" evidence="25">
    <location>
        <begin position="117"/>
        <end position="121"/>
    </location>
</feature>
<feature type="helix" evidence="25">
    <location>
        <begin position="123"/>
        <end position="126"/>
    </location>
</feature>
<feature type="strand" evidence="26">
    <location>
        <begin position="128"/>
        <end position="130"/>
    </location>
</feature>
<feature type="helix" evidence="25">
    <location>
        <begin position="131"/>
        <end position="135"/>
    </location>
</feature>
<feature type="strand" evidence="25">
    <location>
        <begin position="140"/>
        <end position="147"/>
    </location>
</feature>
<feature type="helix" evidence="25">
    <location>
        <begin position="148"/>
        <end position="151"/>
    </location>
</feature>
<feature type="helix" evidence="25">
    <location>
        <begin position="160"/>
        <end position="163"/>
    </location>
</feature>
<feature type="helix" evidence="25">
    <location>
        <begin position="164"/>
        <end position="167"/>
    </location>
</feature>
<feature type="helix" evidence="25">
    <location>
        <begin position="168"/>
        <end position="171"/>
    </location>
</feature>
<feature type="strand" evidence="25">
    <location>
        <begin position="177"/>
        <end position="182"/>
    </location>
</feature>
<feature type="helix" evidence="25">
    <location>
        <begin position="186"/>
        <end position="196"/>
    </location>
</feature>
<feature type="strand" evidence="25">
    <location>
        <begin position="202"/>
        <end position="205"/>
    </location>
</feature>
<feature type="strand" evidence="25">
    <location>
        <begin position="213"/>
        <end position="219"/>
    </location>
</feature>
<feature type="helix" evidence="25">
    <location>
        <begin position="223"/>
        <end position="233"/>
    </location>
</feature>
<feature type="turn" evidence="25">
    <location>
        <begin position="234"/>
        <end position="236"/>
    </location>
</feature>
<feature type="strand" evidence="25">
    <location>
        <begin position="239"/>
        <end position="242"/>
    </location>
</feature>
<feature type="helix" evidence="25">
    <location>
        <begin position="246"/>
        <end position="258"/>
    </location>
</feature>
<feature type="strand" evidence="25">
    <location>
        <begin position="263"/>
        <end position="266"/>
    </location>
</feature>
<feature type="helix" evidence="25">
    <location>
        <begin position="272"/>
        <end position="283"/>
    </location>
</feature>
<feature type="strand" evidence="25">
    <location>
        <begin position="288"/>
        <end position="292"/>
    </location>
</feature>
<feature type="turn" evidence="25">
    <location>
        <begin position="298"/>
        <end position="300"/>
    </location>
</feature>
<feature type="strand" evidence="25">
    <location>
        <begin position="307"/>
        <end position="312"/>
    </location>
</feature>
<feature type="helix" evidence="25">
    <location>
        <begin position="317"/>
        <end position="324"/>
    </location>
</feature>
<feature type="strand" evidence="25">
    <location>
        <begin position="334"/>
        <end position="340"/>
    </location>
</feature>
<feature type="helix" evidence="25">
    <location>
        <begin position="342"/>
        <end position="353"/>
    </location>
</feature>
<feature type="helix" evidence="25">
    <location>
        <begin position="359"/>
        <end position="375"/>
    </location>
</feature>
<feature type="helix" evidence="25">
    <location>
        <begin position="381"/>
        <end position="388"/>
    </location>
</feature>
<feature type="strand" evidence="26">
    <location>
        <begin position="398"/>
        <end position="400"/>
    </location>
</feature>
<feature type="helix" evidence="25">
    <location>
        <begin position="401"/>
        <end position="404"/>
    </location>
</feature>
<feature type="strand" evidence="25">
    <location>
        <begin position="409"/>
        <end position="411"/>
    </location>
</feature>
<feature type="helix" evidence="25">
    <location>
        <begin position="413"/>
        <end position="425"/>
    </location>
</feature>
<feature type="turn" evidence="25">
    <location>
        <begin position="426"/>
        <end position="428"/>
    </location>
</feature>
<feature type="helix" evidence="25">
    <location>
        <begin position="432"/>
        <end position="440"/>
    </location>
</feature>
<feature type="helix" evidence="25">
    <location>
        <begin position="445"/>
        <end position="449"/>
    </location>
</feature>
<feature type="helix" evidence="25">
    <location>
        <begin position="452"/>
        <end position="454"/>
    </location>
</feature>
<feature type="turn" evidence="25">
    <location>
        <begin position="456"/>
        <end position="463"/>
    </location>
</feature>
<feature type="helix" evidence="25">
    <location>
        <begin position="466"/>
        <end position="478"/>
    </location>
</feature>
<feature type="strand" evidence="25">
    <location>
        <begin position="481"/>
        <end position="484"/>
    </location>
</feature>
<feature type="helix" evidence="25">
    <location>
        <begin position="486"/>
        <end position="488"/>
    </location>
</feature>
<feature type="strand" evidence="25">
    <location>
        <begin position="492"/>
        <end position="494"/>
    </location>
</feature>
<feature type="helix" evidence="25">
    <location>
        <begin position="496"/>
        <end position="498"/>
    </location>
</feature>
<feature type="helix" evidence="25">
    <location>
        <begin position="499"/>
        <end position="502"/>
    </location>
</feature>
<feature type="strand" evidence="25">
    <location>
        <begin position="509"/>
        <end position="511"/>
    </location>
</feature>
<feature type="helix" evidence="27">
    <location>
        <begin position="533"/>
        <end position="550"/>
    </location>
</feature>
<feature type="helix" evidence="27">
    <location>
        <begin position="554"/>
        <end position="557"/>
    </location>
</feature>
<feature type="helix" evidence="27">
    <location>
        <begin position="560"/>
        <end position="569"/>
    </location>
</feature>
<feature type="helix" evidence="27">
    <location>
        <begin position="574"/>
        <end position="578"/>
    </location>
</feature>
<feature type="helix" evidence="27">
    <location>
        <begin position="585"/>
        <end position="603"/>
    </location>
</feature>
<dbReference type="EC" id="5.6.2.4" evidence="5 9"/>
<dbReference type="EMBL" id="M30198">
    <property type="protein sequence ID" value="AAA24517.1"/>
    <property type="status" value="ALT_INIT"/>
    <property type="molecule type" value="Genomic_DNA"/>
</dbReference>
<dbReference type="EMBL" id="M87049">
    <property type="protein sequence ID" value="AAA67618.1"/>
    <property type="status" value="ALT_INIT"/>
    <property type="molecule type" value="Genomic_DNA"/>
</dbReference>
<dbReference type="EMBL" id="U00096">
    <property type="protein sequence ID" value="AAT48221.1"/>
    <property type="molecule type" value="Genomic_DNA"/>
</dbReference>
<dbReference type="EMBL" id="AP009048">
    <property type="protein sequence ID" value="BAE77479.1"/>
    <property type="molecule type" value="Genomic_DNA"/>
</dbReference>
<dbReference type="RefSeq" id="WP_000035581.1">
    <property type="nucleotide sequence ID" value="NZ_SSZK01000046.1"/>
</dbReference>
<dbReference type="RefSeq" id="YP_026263.3">
    <property type="nucleotide sequence ID" value="NC_000913.3"/>
</dbReference>
<dbReference type="PDB" id="1OYW">
    <property type="method" value="X-ray"/>
    <property type="resolution" value="1.80 A"/>
    <property type="chains" value="A=1-522"/>
</dbReference>
<dbReference type="PDB" id="1OYY">
    <property type="method" value="X-ray"/>
    <property type="resolution" value="2.50 A"/>
    <property type="chains" value="A=1-523"/>
</dbReference>
<dbReference type="PDB" id="1WUD">
    <property type="method" value="X-ray"/>
    <property type="resolution" value="2.20 A"/>
    <property type="chains" value="A/B/D=524-609"/>
</dbReference>
<dbReference type="PDBsum" id="1OYW"/>
<dbReference type="PDBsum" id="1OYY"/>
<dbReference type="PDBsum" id="1WUD"/>
<dbReference type="SMR" id="P15043"/>
<dbReference type="BioGRID" id="4259619">
    <property type="interactions" value="153"/>
</dbReference>
<dbReference type="DIP" id="DIP-10656N"/>
<dbReference type="FunCoup" id="P15043">
    <property type="interactions" value="556"/>
</dbReference>
<dbReference type="IntAct" id="P15043">
    <property type="interactions" value="12"/>
</dbReference>
<dbReference type="STRING" id="511145.b3822"/>
<dbReference type="DrugBank" id="DB02930">
    <property type="generic name" value="Adenosine 5'-[gamma-thio]triphosphate"/>
</dbReference>
<dbReference type="PaxDb" id="511145-b3822"/>
<dbReference type="EnsemblBacteria" id="AAT48221">
    <property type="protein sequence ID" value="AAT48221"/>
    <property type="gene ID" value="b3822"/>
</dbReference>
<dbReference type="GeneID" id="93778115"/>
<dbReference type="GeneID" id="948318"/>
<dbReference type="KEGG" id="ecj:JW5855"/>
<dbReference type="KEGG" id="eco:b3822"/>
<dbReference type="KEGG" id="ecoc:C3026_20685"/>
<dbReference type="PATRIC" id="fig|511145.12.peg.3938"/>
<dbReference type="EchoBASE" id="EB0826"/>
<dbReference type="eggNOG" id="COG0514">
    <property type="taxonomic scope" value="Bacteria"/>
</dbReference>
<dbReference type="HOGENOM" id="CLU_001103_14_3_6"/>
<dbReference type="InParanoid" id="P15043"/>
<dbReference type="OMA" id="HHDIPKS"/>
<dbReference type="OrthoDB" id="9760034at2"/>
<dbReference type="PhylomeDB" id="P15043"/>
<dbReference type="BioCyc" id="EcoCyc:EG10833-MONOMER"/>
<dbReference type="BioCyc" id="MetaCyc:EG10833-MONOMER"/>
<dbReference type="BRENDA" id="3.6.4.12">
    <property type="organism ID" value="2026"/>
</dbReference>
<dbReference type="CD-CODE" id="B55775CA">
    <property type="entry name" value="SSB condensate"/>
</dbReference>
<dbReference type="EvolutionaryTrace" id="P15043"/>
<dbReference type="PRO" id="PR:P15043"/>
<dbReference type="Proteomes" id="UP000000625">
    <property type="component" value="Chromosome"/>
</dbReference>
<dbReference type="GO" id="GO:0043590">
    <property type="term" value="C:bacterial nucleoid"/>
    <property type="evidence" value="ECO:0000314"/>
    <property type="project" value="UniProtKB"/>
</dbReference>
<dbReference type="GO" id="GO:0005694">
    <property type="term" value="C:chromosome"/>
    <property type="evidence" value="ECO:0000318"/>
    <property type="project" value="GO_Central"/>
</dbReference>
<dbReference type="GO" id="GO:0005737">
    <property type="term" value="C:cytoplasm"/>
    <property type="evidence" value="ECO:0000314"/>
    <property type="project" value="EcoliWiki"/>
</dbReference>
<dbReference type="GO" id="GO:0030894">
    <property type="term" value="C:replisome"/>
    <property type="evidence" value="ECO:0000314"/>
    <property type="project" value="UniProtKB"/>
</dbReference>
<dbReference type="GO" id="GO:0017117">
    <property type="term" value="C:single-stranded DNA-dependent ATP-dependent DNA helicase complex"/>
    <property type="evidence" value="ECO:0000314"/>
    <property type="project" value="EcoliWiki"/>
</dbReference>
<dbReference type="GO" id="GO:0043138">
    <property type="term" value="F:3'-5' DNA helicase activity"/>
    <property type="evidence" value="ECO:0000314"/>
    <property type="project" value="UniProtKB"/>
</dbReference>
<dbReference type="GO" id="GO:0005524">
    <property type="term" value="F:ATP binding"/>
    <property type="evidence" value="ECO:0007669"/>
    <property type="project" value="UniProtKB-KW"/>
</dbReference>
<dbReference type="GO" id="GO:0016887">
    <property type="term" value="F:ATP hydrolysis activity"/>
    <property type="evidence" value="ECO:0000314"/>
    <property type="project" value="EcoliWiki"/>
</dbReference>
<dbReference type="GO" id="GO:0008094">
    <property type="term" value="F:ATP-dependent activity, acting on DNA"/>
    <property type="evidence" value="ECO:0000314"/>
    <property type="project" value="EcoliWiki"/>
</dbReference>
<dbReference type="GO" id="GO:0140640">
    <property type="term" value="F:catalytic activity, acting on a nucleic acid"/>
    <property type="evidence" value="ECO:0000314"/>
    <property type="project" value="UniProtKB"/>
</dbReference>
<dbReference type="GO" id="GO:0003677">
    <property type="term" value="F:DNA binding"/>
    <property type="evidence" value="ECO:0000314"/>
    <property type="project" value="EcoliWiki"/>
</dbReference>
<dbReference type="GO" id="GO:0003678">
    <property type="term" value="F:DNA helicase activity"/>
    <property type="evidence" value="ECO:0000314"/>
    <property type="project" value="EcoliWiki"/>
</dbReference>
<dbReference type="GO" id="GO:0009378">
    <property type="term" value="F:four-way junction helicase activity"/>
    <property type="evidence" value="ECO:0000318"/>
    <property type="project" value="GO_Central"/>
</dbReference>
<dbReference type="GO" id="GO:0017116">
    <property type="term" value="F:single-stranded DNA helicase activity"/>
    <property type="evidence" value="ECO:0000314"/>
    <property type="project" value="EcoliWiki"/>
</dbReference>
<dbReference type="GO" id="GO:0046914">
    <property type="term" value="F:transition metal ion binding"/>
    <property type="evidence" value="ECO:0000314"/>
    <property type="project" value="EcoliWiki"/>
</dbReference>
<dbReference type="GO" id="GO:0008270">
    <property type="term" value="F:zinc ion binding"/>
    <property type="evidence" value="ECO:0000315"/>
    <property type="project" value="EcoliWiki"/>
</dbReference>
<dbReference type="GO" id="GO:0006974">
    <property type="term" value="P:DNA damage response"/>
    <property type="evidence" value="ECO:0000316"/>
    <property type="project" value="EcoliWiki"/>
</dbReference>
<dbReference type="GO" id="GO:0006310">
    <property type="term" value="P:DNA recombination"/>
    <property type="evidence" value="ECO:0000314"/>
    <property type="project" value="EcoliWiki"/>
</dbReference>
<dbReference type="GO" id="GO:0006281">
    <property type="term" value="P:DNA repair"/>
    <property type="evidence" value="ECO:0000316"/>
    <property type="project" value="EcoliWiki"/>
</dbReference>
<dbReference type="GO" id="GO:0006260">
    <property type="term" value="P:DNA replication"/>
    <property type="evidence" value="ECO:0007669"/>
    <property type="project" value="InterPro"/>
</dbReference>
<dbReference type="GO" id="GO:0009432">
    <property type="term" value="P:SOS response"/>
    <property type="evidence" value="ECO:0007669"/>
    <property type="project" value="UniProtKB-KW"/>
</dbReference>
<dbReference type="CDD" id="cd17920">
    <property type="entry name" value="DEXHc_RecQ"/>
    <property type="match status" value="1"/>
</dbReference>
<dbReference type="CDD" id="cd18794">
    <property type="entry name" value="SF2_C_RecQ"/>
    <property type="match status" value="1"/>
</dbReference>
<dbReference type="FunFam" id="1.10.10.10:FF:000175">
    <property type="entry name" value="ATP-dependent DNA helicase RecQ"/>
    <property type="match status" value="1"/>
</dbReference>
<dbReference type="FunFam" id="1.10.150.80:FF:000002">
    <property type="entry name" value="ATP-dependent DNA helicase RecQ"/>
    <property type="match status" value="1"/>
</dbReference>
<dbReference type="FunFam" id="3.40.50.300:FF:000296">
    <property type="entry name" value="ATP-dependent DNA helicase RecQ"/>
    <property type="match status" value="1"/>
</dbReference>
<dbReference type="FunFam" id="3.40.50.300:FF:000156">
    <property type="entry name" value="ATP-dependent DNA helicase recQ"/>
    <property type="match status" value="1"/>
</dbReference>
<dbReference type="Gene3D" id="1.10.150.80">
    <property type="entry name" value="HRDC domain"/>
    <property type="match status" value="1"/>
</dbReference>
<dbReference type="Gene3D" id="3.40.50.300">
    <property type="entry name" value="P-loop containing nucleotide triphosphate hydrolases"/>
    <property type="match status" value="2"/>
</dbReference>
<dbReference type="Gene3D" id="1.10.10.10">
    <property type="entry name" value="Winged helix-like DNA-binding domain superfamily/Winged helix DNA-binding domain"/>
    <property type="match status" value="1"/>
</dbReference>
<dbReference type="InterPro" id="IPR011545">
    <property type="entry name" value="DEAD/DEAH_box_helicase_dom"/>
</dbReference>
<dbReference type="InterPro" id="IPR004589">
    <property type="entry name" value="DNA_helicase_ATP-dep_RecQ"/>
</dbReference>
<dbReference type="InterPro" id="IPR006293">
    <property type="entry name" value="DNA_helicase_ATP-dep_RecQ_bac"/>
</dbReference>
<dbReference type="InterPro" id="IPR014001">
    <property type="entry name" value="Helicase_ATP-bd"/>
</dbReference>
<dbReference type="InterPro" id="IPR001650">
    <property type="entry name" value="Helicase_C-like"/>
</dbReference>
<dbReference type="InterPro" id="IPR010997">
    <property type="entry name" value="HRDC-like_sf"/>
</dbReference>
<dbReference type="InterPro" id="IPR002121">
    <property type="entry name" value="HRDC_dom"/>
</dbReference>
<dbReference type="InterPro" id="IPR044876">
    <property type="entry name" value="HRDC_dom_sf"/>
</dbReference>
<dbReference type="InterPro" id="IPR027417">
    <property type="entry name" value="P-loop_NTPase"/>
</dbReference>
<dbReference type="InterPro" id="IPR032284">
    <property type="entry name" value="RecQ_Zn-bd"/>
</dbReference>
<dbReference type="InterPro" id="IPR018982">
    <property type="entry name" value="RQC_domain"/>
</dbReference>
<dbReference type="InterPro" id="IPR036388">
    <property type="entry name" value="WH-like_DNA-bd_sf"/>
</dbReference>
<dbReference type="NCBIfam" id="NF008279">
    <property type="entry name" value="PRK11057.1"/>
    <property type="match status" value="1"/>
</dbReference>
<dbReference type="NCBIfam" id="TIGR01389">
    <property type="entry name" value="recQ"/>
    <property type="match status" value="1"/>
</dbReference>
<dbReference type="NCBIfam" id="TIGR00614">
    <property type="entry name" value="recQ_fam"/>
    <property type="match status" value="1"/>
</dbReference>
<dbReference type="PANTHER" id="PTHR13710:SF105">
    <property type="entry name" value="ATP-DEPENDENT DNA HELICASE Q1"/>
    <property type="match status" value="1"/>
</dbReference>
<dbReference type="PANTHER" id="PTHR13710">
    <property type="entry name" value="DNA HELICASE RECQ FAMILY MEMBER"/>
    <property type="match status" value="1"/>
</dbReference>
<dbReference type="Pfam" id="PF00270">
    <property type="entry name" value="DEAD"/>
    <property type="match status" value="1"/>
</dbReference>
<dbReference type="Pfam" id="PF00271">
    <property type="entry name" value="Helicase_C"/>
    <property type="match status" value="1"/>
</dbReference>
<dbReference type="Pfam" id="PF00570">
    <property type="entry name" value="HRDC"/>
    <property type="match status" value="1"/>
</dbReference>
<dbReference type="Pfam" id="PF16124">
    <property type="entry name" value="RecQ_Zn_bind"/>
    <property type="match status" value="1"/>
</dbReference>
<dbReference type="Pfam" id="PF09382">
    <property type="entry name" value="RQC"/>
    <property type="match status" value="1"/>
</dbReference>
<dbReference type="SMART" id="SM00487">
    <property type="entry name" value="DEXDc"/>
    <property type="match status" value="1"/>
</dbReference>
<dbReference type="SMART" id="SM00490">
    <property type="entry name" value="HELICc"/>
    <property type="match status" value="1"/>
</dbReference>
<dbReference type="SMART" id="SM00341">
    <property type="entry name" value="HRDC"/>
    <property type="match status" value="1"/>
</dbReference>
<dbReference type="SMART" id="SM00956">
    <property type="entry name" value="RQC"/>
    <property type="match status" value="1"/>
</dbReference>
<dbReference type="SUPFAM" id="SSF47819">
    <property type="entry name" value="HRDC-like"/>
    <property type="match status" value="1"/>
</dbReference>
<dbReference type="SUPFAM" id="SSF52540">
    <property type="entry name" value="P-loop containing nucleoside triphosphate hydrolases"/>
    <property type="match status" value="2"/>
</dbReference>
<dbReference type="PROSITE" id="PS51192">
    <property type="entry name" value="HELICASE_ATP_BIND_1"/>
    <property type="match status" value="1"/>
</dbReference>
<dbReference type="PROSITE" id="PS51194">
    <property type="entry name" value="HELICASE_CTER"/>
    <property type="match status" value="1"/>
</dbReference>
<dbReference type="PROSITE" id="PS50967">
    <property type="entry name" value="HRDC"/>
    <property type="match status" value="1"/>
</dbReference>
<gene>
    <name evidence="17" type="primary">recQ</name>
    <name type="ordered locus">b3822</name>
    <name type="ordered locus">JW5855</name>
</gene>
<keyword id="KW-0002">3D-structure</keyword>
<keyword id="KW-0067">ATP-binding</keyword>
<keyword id="KW-0903">Direct protein sequencing</keyword>
<keyword id="KW-0227">DNA damage</keyword>
<keyword id="KW-0233">DNA recombination</keyword>
<keyword id="KW-0234">DNA repair</keyword>
<keyword id="KW-0238">DNA-binding</keyword>
<keyword id="KW-0347">Helicase</keyword>
<keyword id="KW-0378">Hydrolase</keyword>
<keyword id="KW-0413">Isomerase</keyword>
<keyword id="KW-0464">Manganese</keyword>
<keyword id="KW-0479">Metal-binding</keyword>
<keyword id="KW-0547">Nucleotide-binding</keyword>
<keyword id="KW-1185">Reference proteome</keyword>
<keyword id="KW-0742">SOS response</keyword>
<keyword id="KW-0862">Zinc</keyword>